<feature type="chain" id="PRO_0000329280" description="Protein LKAAEAR1">
    <location>
        <begin position="1"/>
        <end position="198"/>
    </location>
</feature>
<feature type="region of interest" description="Disordered" evidence="1">
    <location>
        <begin position="1"/>
        <end position="47"/>
    </location>
</feature>
<feature type="compositionally biased region" description="Gly residues" evidence="1">
    <location>
        <begin position="20"/>
        <end position="30"/>
    </location>
</feature>
<feature type="sequence conflict" description="In Ref. 1; BAC36518." evidence="2" ref="1">
    <original>E</original>
    <variation>K</variation>
    <location>
        <position position="189"/>
    </location>
</feature>
<gene>
    <name type="primary">Lkaaear1</name>
</gene>
<accession>Q8BIG2</accession>
<accession>Q5I0W3</accession>
<keyword id="KW-1185">Reference proteome</keyword>
<sequence>MPTLGVKGARERDKNSASGAGAGAGAGAGAGEKHRKGPRTTDPPKTGWALTKQRLVALSPTLRQRHLLFGDFLDDIGKVASMFPRESVELPYDMPDPRTWSQALNLPSEHQNRFLGLIKAAEARGRVHTLRLRYTRMRAEEISLLIQKQSSARAAIRLELFLPPQLKPTKIPDPLDRHERRRVETILEEEVDGNIFPR</sequence>
<proteinExistence type="evidence at transcript level"/>
<protein>
    <recommendedName>
        <fullName>Protein LKAAEAR1</fullName>
    </recommendedName>
    <alternativeName>
        <fullName>LKAAEAR motif-containing protein 1</fullName>
    </alternativeName>
</protein>
<reference key="1">
    <citation type="journal article" date="2005" name="Science">
        <title>The transcriptional landscape of the mammalian genome.</title>
        <authorList>
            <person name="Carninci P."/>
            <person name="Kasukawa T."/>
            <person name="Katayama S."/>
            <person name="Gough J."/>
            <person name="Frith M.C."/>
            <person name="Maeda N."/>
            <person name="Oyama R."/>
            <person name="Ravasi T."/>
            <person name="Lenhard B."/>
            <person name="Wells C."/>
            <person name="Kodzius R."/>
            <person name="Shimokawa K."/>
            <person name="Bajic V.B."/>
            <person name="Brenner S.E."/>
            <person name="Batalov S."/>
            <person name="Forrest A.R."/>
            <person name="Zavolan M."/>
            <person name="Davis M.J."/>
            <person name="Wilming L.G."/>
            <person name="Aidinis V."/>
            <person name="Allen J.E."/>
            <person name="Ambesi-Impiombato A."/>
            <person name="Apweiler R."/>
            <person name="Aturaliya R.N."/>
            <person name="Bailey T.L."/>
            <person name="Bansal M."/>
            <person name="Baxter L."/>
            <person name="Beisel K.W."/>
            <person name="Bersano T."/>
            <person name="Bono H."/>
            <person name="Chalk A.M."/>
            <person name="Chiu K.P."/>
            <person name="Choudhary V."/>
            <person name="Christoffels A."/>
            <person name="Clutterbuck D.R."/>
            <person name="Crowe M.L."/>
            <person name="Dalla E."/>
            <person name="Dalrymple B.P."/>
            <person name="de Bono B."/>
            <person name="Della Gatta G."/>
            <person name="di Bernardo D."/>
            <person name="Down T."/>
            <person name="Engstrom P."/>
            <person name="Fagiolini M."/>
            <person name="Faulkner G."/>
            <person name="Fletcher C.F."/>
            <person name="Fukushima T."/>
            <person name="Furuno M."/>
            <person name="Futaki S."/>
            <person name="Gariboldi M."/>
            <person name="Georgii-Hemming P."/>
            <person name="Gingeras T.R."/>
            <person name="Gojobori T."/>
            <person name="Green R.E."/>
            <person name="Gustincich S."/>
            <person name="Harbers M."/>
            <person name="Hayashi Y."/>
            <person name="Hensch T.K."/>
            <person name="Hirokawa N."/>
            <person name="Hill D."/>
            <person name="Huminiecki L."/>
            <person name="Iacono M."/>
            <person name="Ikeo K."/>
            <person name="Iwama A."/>
            <person name="Ishikawa T."/>
            <person name="Jakt M."/>
            <person name="Kanapin A."/>
            <person name="Katoh M."/>
            <person name="Kawasawa Y."/>
            <person name="Kelso J."/>
            <person name="Kitamura H."/>
            <person name="Kitano H."/>
            <person name="Kollias G."/>
            <person name="Krishnan S.P."/>
            <person name="Kruger A."/>
            <person name="Kummerfeld S.K."/>
            <person name="Kurochkin I.V."/>
            <person name="Lareau L.F."/>
            <person name="Lazarevic D."/>
            <person name="Lipovich L."/>
            <person name="Liu J."/>
            <person name="Liuni S."/>
            <person name="McWilliam S."/>
            <person name="Madan Babu M."/>
            <person name="Madera M."/>
            <person name="Marchionni L."/>
            <person name="Matsuda H."/>
            <person name="Matsuzawa S."/>
            <person name="Miki H."/>
            <person name="Mignone F."/>
            <person name="Miyake S."/>
            <person name="Morris K."/>
            <person name="Mottagui-Tabar S."/>
            <person name="Mulder N."/>
            <person name="Nakano N."/>
            <person name="Nakauchi H."/>
            <person name="Ng P."/>
            <person name="Nilsson R."/>
            <person name="Nishiguchi S."/>
            <person name="Nishikawa S."/>
            <person name="Nori F."/>
            <person name="Ohara O."/>
            <person name="Okazaki Y."/>
            <person name="Orlando V."/>
            <person name="Pang K.C."/>
            <person name="Pavan W.J."/>
            <person name="Pavesi G."/>
            <person name="Pesole G."/>
            <person name="Petrovsky N."/>
            <person name="Piazza S."/>
            <person name="Reed J."/>
            <person name="Reid J.F."/>
            <person name="Ring B.Z."/>
            <person name="Ringwald M."/>
            <person name="Rost B."/>
            <person name="Ruan Y."/>
            <person name="Salzberg S.L."/>
            <person name="Sandelin A."/>
            <person name="Schneider C."/>
            <person name="Schoenbach C."/>
            <person name="Sekiguchi K."/>
            <person name="Semple C.A."/>
            <person name="Seno S."/>
            <person name="Sessa L."/>
            <person name="Sheng Y."/>
            <person name="Shibata Y."/>
            <person name="Shimada H."/>
            <person name="Shimada K."/>
            <person name="Silva D."/>
            <person name="Sinclair B."/>
            <person name="Sperling S."/>
            <person name="Stupka E."/>
            <person name="Sugiura K."/>
            <person name="Sultana R."/>
            <person name="Takenaka Y."/>
            <person name="Taki K."/>
            <person name="Tammoja K."/>
            <person name="Tan S.L."/>
            <person name="Tang S."/>
            <person name="Taylor M.S."/>
            <person name="Tegner J."/>
            <person name="Teichmann S.A."/>
            <person name="Ueda H.R."/>
            <person name="van Nimwegen E."/>
            <person name="Verardo R."/>
            <person name="Wei C.L."/>
            <person name="Yagi K."/>
            <person name="Yamanishi H."/>
            <person name="Zabarovsky E."/>
            <person name="Zhu S."/>
            <person name="Zimmer A."/>
            <person name="Hide W."/>
            <person name="Bult C."/>
            <person name="Grimmond S.M."/>
            <person name="Teasdale R.D."/>
            <person name="Liu E.T."/>
            <person name="Brusic V."/>
            <person name="Quackenbush J."/>
            <person name="Wahlestedt C."/>
            <person name="Mattick J.S."/>
            <person name="Hume D.A."/>
            <person name="Kai C."/>
            <person name="Sasaki D."/>
            <person name="Tomaru Y."/>
            <person name="Fukuda S."/>
            <person name="Kanamori-Katayama M."/>
            <person name="Suzuki M."/>
            <person name="Aoki J."/>
            <person name="Arakawa T."/>
            <person name="Iida J."/>
            <person name="Imamura K."/>
            <person name="Itoh M."/>
            <person name="Kato T."/>
            <person name="Kawaji H."/>
            <person name="Kawagashira N."/>
            <person name="Kawashima T."/>
            <person name="Kojima M."/>
            <person name="Kondo S."/>
            <person name="Konno H."/>
            <person name="Nakano K."/>
            <person name="Ninomiya N."/>
            <person name="Nishio T."/>
            <person name="Okada M."/>
            <person name="Plessy C."/>
            <person name="Shibata K."/>
            <person name="Shiraki T."/>
            <person name="Suzuki S."/>
            <person name="Tagami M."/>
            <person name="Waki K."/>
            <person name="Watahiki A."/>
            <person name="Okamura-Oho Y."/>
            <person name="Suzuki H."/>
            <person name="Kawai J."/>
            <person name="Hayashizaki Y."/>
        </authorList>
    </citation>
    <scope>NUCLEOTIDE SEQUENCE [LARGE SCALE MRNA]</scope>
    <source>
        <strain>C57BL/6J</strain>
        <tissue>Testis</tissue>
    </source>
</reference>
<reference key="2">
    <citation type="journal article" date="2009" name="PLoS Biol.">
        <title>Lineage-specific biology revealed by a finished genome assembly of the mouse.</title>
        <authorList>
            <person name="Church D.M."/>
            <person name="Goodstadt L."/>
            <person name="Hillier L.W."/>
            <person name="Zody M.C."/>
            <person name="Goldstein S."/>
            <person name="She X."/>
            <person name="Bult C.J."/>
            <person name="Agarwala R."/>
            <person name="Cherry J.L."/>
            <person name="DiCuccio M."/>
            <person name="Hlavina W."/>
            <person name="Kapustin Y."/>
            <person name="Meric P."/>
            <person name="Maglott D."/>
            <person name="Birtle Z."/>
            <person name="Marques A.C."/>
            <person name="Graves T."/>
            <person name="Zhou S."/>
            <person name="Teague B."/>
            <person name="Potamousis K."/>
            <person name="Churas C."/>
            <person name="Place M."/>
            <person name="Herschleb J."/>
            <person name="Runnheim R."/>
            <person name="Forrest D."/>
            <person name="Amos-Landgraf J."/>
            <person name="Schwartz D.C."/>
            <person name="Cheng Z."/>
            <person name="Lindblad-Toh K."/>
            <person name="Eichler E.E."/>
            <person name="Ponting C.P."/>
        </authorList>
    </citation>
    <scope>NUCLEOTIDE SEQUENCE [LARGE SCALE GENOMIC DNA]</scope>
    <source>
        <strain>C57BL/6J</strain>
    </source>
</reference>
<reference key="3">
    <citation type="journal article" date="2004" name="Genome Res.">
        <title>The status, quality, and expansion of the NIH full-length cDNA project: the Mammalian Gene Collection (MGC).</title>
        <authorList>
            <consortium name="The MGC Project Team"/>
        </authorList>
    </citation>
    <scope>NUCLEOTIDE SEQUENCE [LARGE SCALE MRNA]</scope>
    <source>
        <tissue>Testis</tissue>
    </source>
</reference>
<organism>
    <name type="scientific">Mus musculus</name>
    <name type="common">Mouse</name>
    <dbReference type="NCBI Taxonomy" id="10090"/>
    <lineage>
        <taxon>Eukaryota</taxon>
        <taxon>Metazoa</taxon>
        <taxon>Chordata</taxon>
        <taxon>Craniata</taxon>
        <taxon>Vertebrata</taxon>
        <taxon>Euteleostomi</taxon>
        <taxon>Mammalia</taxon>
        <taxon>Eutheria</taxon>
        <taxon>Euarchontoglires</taxon>
        <taxon>Glires</taxon>
        <taxon>Rodentia</taxon>
        <taxon>Myomorpha</taxon>
        <taxon>Muroidea</taxon>
        <taxon>Muridae</taxon>
        <taxon>Murinae</taxon>
        <taxon>Mus</taxon>
        <taxon>Mus</taxon>
    </lineage>
</organism>
<dbReference type="EMBL" id="AK076877">
    <property type="protein sequence ID" value="BAC36518.1"/>
    <property type="molecule type" value="mRNA"/>
</dbReference>
<dbReference type="EMBL" id="AL845173">
    <property type="status" value="NOT_ANNOTATED_CDS"/>
    <property type="molecule type" value="Genomic_DNA"/>
</dbReference>
<dbReference type="EMBL" id="BC087873">
    <property type="protein sequence ID" value="AAH87873.1"/>
    <property type="molecule type" value="mRNA"/>
</dbReference>
<dbReference type="CCDS" id="CCDS17221.1"/>
<dbReference type="RefSeq" id="NP_950188.2">
    <property type="nucleotide sequence ID" value="NM_199023.3"/>
</dbReference>
<dbReference type="SMR" id="Q8BIG2"/>
<dbReference type="STRING" id="10090.ENSMUSP00000061134"/>
<dbReference type="PhosphoSitePlus" id="Q8BIG2"/>
<dbReference type="PaxDb" id="10090-ENSMUSP00000061134"/>
<dbReference type="ProteomicsDB" id="290131"/>
<dbReference type="Antibodypedia" id="44636">
    <property type="antibodies" value="66 antibodies from 11 providers"/>
</dbReference>
<dbReference type="Ensembl" id="ENSMUST00000052416.4">
    <property type="protein sequence ID" value="ENSMUSP00000061134.4"/>
    <property type="gene ID" value="ENSMUSG00000045794.4"/>
</dbReference>
<dbReference type="GeneID" id="277496"/>
<dbReference type="KEGG" id="mmu:277496"/>
<dbReference type="UCSC" id="uc008onh.1">
    <property type="organism name" value="mouse"/>
</dbReference>
<dbReference type="AGR" id="MGI:2685538"/>
<dbReference type="CTD" id="198437"/>
<dbReference type="MGI" id="MGI:2685538">
    <property type="gene designation" value="Lkaaear1"/>
</dbReference>
<dbReference type="VEuPathDB" id="HostDB:ENSMUSG00000045794"/>
<dbReference type="eggNOG" id="ENOG502S5XG">
    <property type="taxonomic scope" value="Eukaryota"/>
</dbReference>
<dbReference type="GeneTree" id="ENSGT00390000009883"/>
<dbReference type="HOGENOM" id="CLU_092463_0_0_1"/>
<dbReference type="InParanoid" id="Q8BIG2"/>
<dbReference type="OMA" id="PAQCHRH"/>
<dbReference type="OrthoDB" id="10045727at2759"/>
<dbReference type="PhylomeDB" id="Q8BIG2"/>
<dbReference type="TreeFam" id="TF337699"/>
<dbReference type="BioGRID-ORCS" id="277496">
    <property type="hits" value="2 hits in 77 CRISPR screens"/>
</dbReference>
<dbReference type="PRO" id="PR:Q8BIG2"/>
<dbReference type="Proteomes" id="UP000000589">
    <property type="component" value="Chromosome 2"/>
</dbReference>
<dbReference type="RNAct" id="Q8BIG2">
    <property type="molecule type" value="protein"/>
</dbReference>
<dbReference type="Bgee" id="ENSMUSG00000045794">
    <property type="expression patterns" value="Expressed in seminiferous tubule of testis and 8 other cell types or tissues"/>
</dbReference>
<dbReference type="ExpressionAtlas" id="Q8BIG2">
    <property type="expression patterns" value="baseline and differential"/>
</dbReference>
<dbReference type="InterPro" id="IPR029152">
    <property type="entry name" value="LKAAEAR1"/>
</dbReference>
<dbReference type="PANTHER" id="PTHR35665">
    <property type="entry name" value="PROTEIN LKAAEAR1"/>
    <property type="match status" value="1"/>
</dbReference>
<dbReference type="PANTHER" id="PTHR35665:SF1">
    <property type="entry name" value="PROTEIN LKAAEAR1"/>
    <property type="match status" value="1"/>
</dbReference>
<dbReference type="Pfam" id="PF15478">
    <property type="entry name" value="LKAAEAR"/>
    <property type="match status" value="1"/>
</dbReference>
<name>LKAM1_MOUSE</name>
<evidence type="ECO:0000256" key="1">
    <source>
        <dbReference type="SAM" id="MobiDB-lite"/>
    </source>
</evidence>
<evidence type="ECO:0000305" key="2"/>